<accession>Q9NV96</accession>
<accession>A8K9V8</accession>
<accession>E1P539</accession>
<accession>Q658Z3</accession>
<accession>Q96H09</accession>
<accession>Q9NSL9</accession>
<comment type="function">
    <text evidence="6 7 8 9 12 13 15">Accessory component of a P4-ATPase flippase complex which catalyzes the hydrolysis of ATP coupled to the transport of aminophospholipids from the outer to the inner leaflet of various membranes and ensures the maintenance of asymmetric distribution of phospholipids. Phospholipid translocation also seems to be implicated in vesicle formation and in uptake of lipid signaling molecules. The beta subunit may assist in binding of the phospholipid substrate. Required for the proper folding, assembly and ER to Golgi exit of the ATP8A2:TMEM30A flippase complex. ATP8A2:TMEM30A may be involved in regulation of neurite outgrowth, and, reconstituted to liposomes, predomiminantly transports phosphatidylserine (PS) and to a lesser extent phosphatidylethanolamine (PE). The ATP8A1:TMEM30A flippase complex seems to play a role in regulation of cell migration probably involving flippase-mediated translocation of phosphatidylethanolamine (PE) at the plasma membrane. Required for the formation of the ATP8A2, ATP8B1 and ATP8B2 P-type ATPAse intermediate phosphoenzymes. Involved in uptake of platelet-activating factor (PAF), synthetic drug alkylphospholipid edelfosine, and, probably in association with ATP8B1, of perifosine. Also mediates the export of alpha subunits ATP8A1, ATP8B1, ATP8B2, ATP8B4, ATP10A, ATP10B, ATP10D, ATP11A, ATP11B and ATP11C from the ER to other membrane localizations.</text>
</comment>
<comment type="subunit">
    <text evidence="7 8 10 11 12 13 14 15">Component of various P4-ATPase flippase complexes which consists of a catalytic alpha subunit and an accessory beta subunit (PubMed:31416931). Interacts with ATP8A1 to form a flippase complex; this complex forms an intermediate phosphoenzyme (PubMed:31416931). The ATP8A2:TMEM30A flippase complex has been purified, and ATP8B1:TMEM30A and ATP8B2:TMEM30A flippase complexes have been shown to form intermediate phosphoenzymes in vitro. Interacts with alpha subunits ATP8A1, ATP8B1, ATP8B2, ATP8B4, ATP10A, ATP10B, ATP10D, ATP11A, ATP11B and ATP11C.</text>
</comment>
<comment type="interaction">
    <interactant intactId="EBI-2836942">
        <id>Q9NV96</id>
    </interactant>
    <interactant intactId="EBI-77613">
        <id>P05067</id>
        <label>APP</label>
    </interactant>
    <organismsDiffer>false</organismsDiffer>
    <experiments>3</experiments>
</comment>
<comment type="interaction">
    <interactant intactId="EBI-2836942">
        <id>Q9NV96</id>
    </interactant>
    <interactant intactId="EBI-26444318">
        <id>O60312</id>
        <label>ATP10A</label>
    </interactant>
    <organismsDiffer>false</organismsDiffer>
    <experiments>3</experiments>
</comment>
<comment type="interaction">
    <interactant intactId="EBI-2836942">
        <id>Q9NV96</id>
    </interactant>
    <interactant intactId="EBI-21519640">
        <id>P98196</id>
        <label>ATP11A</label>
    </interactant>
    <organismsDiffer>false</organismsDiffer>
    <experiments>5</experiments>
</comment>
<comment type="interaction">
    <interactant intactId="EBI-2836942">
        <id>Q9NV96</id>
    </interactant>
    <interactant intactId="EBI-20857228">
        <id>Q9Y2G3</id>
        <label>ATP11B</label>
    </interactant>
    <organismsDiffer>false</organismsDiffer>
    <experiments>2</experiments>
</comment>
<comment type="interaction">
    <interactant intactId="EBI-2836942">
        <id>Q9NV96</id>
    </interactant>
    <interactant intactId="EBI-11279131">
        <id>Q8NB49</id>
        <label>ATP11C</label>
    </interactant>
    <organismsDiffer>false</organismsDiffer>
    <experiments>3</experiments>
</comment>
<comment type="interaction">
    <interactant intactId="EBI-2836942">
        <id>Q9NV96</id>
    </interactant>
    <interactant intactId="EBI-9539324">
        <id>Q9Y2Q0</id>
        <label>ATP8A1</label>
    </interactant>
    <organismsDiffer>false</organismsDiffer>
    <experiments>5</experiments>
</comment>
<comment type="interaction">
    <interactant intactId="EBI-2836942">
        <id>Q9NV96</id>
    </interactant>
    <interactant intactId="EBI-21654619">
        <id>Q9Y2Q0-2</id>
        <label>ATP8A1</label>
    </interactant>
    <organismsDiffer>false</organismsDiffer>
    <experiments>2</experiments>
</comment>
<comment type="interaction">
    <interactant intactId="EBI-2836942">
        <id>Q9NV96</id>
    </interactant>
    <interactant intactId="EBI-9524729">
        <id>O43520</id>
        <label>ATP8B1</label>
    </interactant>
    <organismsDiffer>false</organismsDiffer>
    <experiments>9</experiments>
</comment>
<comment type="interaction">
    <interactant intactId="EBI-2836942">
        <id>Q9NV96</id>
    </interactant>
    <interactant intactId="EBI-9539266">
        <id>P98198</id>
        <label>ATP8B2</label>
    </interactant>
    <organismsDiffer>false</organismsDiffer>
    <experiments>4</experiments>
</comment>
<comment type="interaction">
    <interactant intactId="EBI-2836942">
        <id>Q9NV96</id>
    </interactant>
    <interactant intactId="EBI-9527207">
        <id>Q8TF62</id>
        <label>ATP8B4</label>
    </interactant>
    <organismsDiffer>false</organismsDiffer>
    <experiments>4</experiments>
</comment>
<comment type="interaction">
    <interactant intactId="EBI-26444832">
        <id>Q9NV96-1</id>
    </interactant>
    <interactant intactId="EBI-26444823">
        <id>O94823-1</id>
        <label>ATP10B</label>
    </interactant>
    <organismsDiffer>false</organismsDiffer>
    <experiments>2</experiments>
</comment>
<comment type="interaction">
    <interactant intactId="EBI-12921610">
        <id>Q9NV96-2</id>
    </interactant>
    <interactant intactId="EBI-930964">
        <id>P54253</id>
        <label>ATXN1</label>
    </interactant>
    <organismsDiffer>false</organismsDiffer>
    <experiments>6</experiments>
</comment>
<comment type="interaction">
    <interactant intactId="EBI-12921610">
        <id>Q9NV96-2</id>
    </interactant>
    <interactant intactId="EBI-466029">
        <id>P42858</id>
        <label>HTT</label>
    </interactant>
    <organismsDiffer>false</organismsDiffer>
    <experiments>3</experiments>
</comment>
<comment type="interaction">
    <interactant intactId="EBI-12921610">
        <id>Q9NV96-2</id>
    </interactant>
    <interactant intactId="EBI-3932027">
        <id>P21145</id>
        <label>MAL</label>
    </interactant>
    <organismsDiffer>false</organismsDiffer>
    <experiments>3</experiments>
</comment>
<comment type="subcellular location">
    <subcellularLocation>
        <location evidence="1">Membrane</location>
        <topology evidence="1">Multi-pass membrane protein</topology>
    </subcellularLocation>
    <subcellularLocation>
        <location>Cell membrane</location>
    </subcellularLocation>
    <subcellularLocation>
        <location>Golgi apparatus</location>
    </subcellularLocation>
    <subcellularLocation>
        <location evidence="1">Cytoplasmic vesicle</location>
        <location evidence="1">Secretory vesicle membrane</location>
    </subcellularLocation>
    <subcellularLocation>
        <location evidence="1">Apical cell membrane</location>
    </subcellularLocation>
</comment>
<comment type="alternative products">
    <event type="alternative splicing"/>
    <isoform>
        <id>Q9NV96-1</id>
        <name>1</name>
        <sequence type="displayed"/>
    </isoform>
    <isoform>
        <id>Q9NV96-2</id>
        <name>2</name>
        <sequence type="described" ref="VSP_019568"/>
    </isoform>
    <isoform>
        <id>Q9NV96-3</id>
        <name>3</name>
        <sequence type="described" ref="VSP_019567"/>
    </isoform>
</comment>
<comment type="domain">
    <text evidence="1">The N-terminal domain seems to play a role in the reaction cycle of the catalytic subunit such as ATP8A2.</text>
</comment>
<comment type="PTM">
    <text evidence="1">N-glycosylated. Contains high mannose-type oligosaccharides (By similarity).</text>
</comment>
<comment type="similarity">
    <text evidence="19">Belongs to the CDC50/LEM3 family.</text>
</comment>
<name>CC50A_HUMAN</name>
<evidence type="ECO:0000250" key="1"/>
<evidence type="ECO:0000255" key="2"/>
<evidence type="ECO:0000256" key="3">
    <source>
        <dbReference type="SAM" id="MobiDB-lite"/>
    </source>
</evidence>
<evidence type="ECO:0000269" key="4">
    <source>
    </source>
</evidence>
<evidence type="ECO:0000269" key="5">
    <source>
    </source>
</evidence>
<evidence type="ECO:0000269" key="6">
    <source>
    </source>
</evidence>
<evidence type="ECO:0000269" key="7">
    <source>
    </source>
</evidence>
<evidence type="ECO:0000269" key="8">
    <source>
    </source>
</evidence>
<evidence type="ECO:0000269" key="9">
    <source>
    </source>
</evidence>
<evidence type="ECO:0000269" key="10">
    <source>
    </source>
</evidence>
<evidence type="ECO:0000269" key="11">
    <source>
    </source>
</evidence>
<evidence type="ECO:0000269" key="12">
    <source>
    </source>
</evidence>
<evidence type="ECO:0000269" key="13">
    <source>
    </source>
</evidence>
<evidence type="ECO:0000269" key="14">
    <source>
    </source>
</evidence>
<evidence type="ECO:0000269" key="15">
    <source>
    </source>
</evidence>
<evidence type="ECO:0000303" key="16">
    <source>
    </source>
</evidence>
<evidence type="ECO:0000303" key="17">
    <source>
    </source>
</evidence>
<evidence type="ECO:0000303" key="18">
    <source>
    </source>
</evidence>
<evidence type="ECO:0000305" key="19"/>
<evidence type="ECO:0000312" key="20">
    <source>
        <dbReference type="HGNC" id="HGNC:16667"/>
    </source>
</evidence>
<evidence type="ECO:0007744" key="21">
    <source>
        <dbReference type="PDB" id="6K7G"/>
    </source>
</evidence>
<evidence type="ECO:0007744" key="22">
    <source>
        <dbReference type="PDB" id="6K7H"/>
    </source>
</evidence>
<evidence type="ECO:0007744" key="23">
    <source>
        <dbReference type="PDB" id="6K7I"/>
    </source>
</evidence>
<evidence type="ECO:0007744" key="24">
    <source>
        <dbReference type="PDB" id="6K7J"/>
    </source>
</evidence>
<evidence type="ECO:0007744" key="25">
    <source>
        <dbReference type="PDB" id="6K7K"/>
    </source>
</evidence>
<evidence type="ECO:0007744" key="26">
    <source>
        <dbReference type="PDB" id="6K7L"/>
    </source>
</evidence>
<evidence type="ECO:0007744" key="27">
    <source>
        <dbReference type="PDB" id="6K7M"/>
    </source>
</evidence>
<evidence type="ECO:0007744" key="28">
    <source>
        <dbReference type="PDB" id="6K7N"/>
    </source>
</evidence>
<evidence type="ECO:0007744" key="29">
    <source>
    </source>
</evidence>
<evidence type="ECO:0007829" key="30">
    <source>
        <dbReference type="PDB" id="6K7L"/>
    </source>
</evidence>
<evidence type="ECO:0007829" key="31">
    <source>
        <dbReference type="PDB" id="6K7M"/>
    </source>
</evidence>
<evidence type="ECO:0007829" key="32">
    <source>
        <dbReference type="PDB" id="7BSV"/>
    </source>
</evidence>
<evidence type="ECO:0007829" key="33">
    <source>
        <dbReference type="PDB" id="8OX5"/>
    </source>
</evidence>
<evidence type="ECO:0007829" key="34">
    <source>
        <dbReference type="PDB" id="8OX6"/>
    </source>
</evidence>
<evidence type="ECO:0007829" key="35">
    <source>
        <dbReference type="PDB" id="8OXC"/>
    </source>
</evidence>
<dbReference type="EMBL" id="AK001718">
    <property type="protein sequence ID" value="BAA91859.1"/>
    <property type="molecule type" value="mRNA"/>
</dbReference>
<dbReference type="EMBL" id="AK292823">
    <property type="protein sequence ID" value="BAF85512.1"/>
    <property type="molecule type" value="mRNA"/>
</dbReference>
<dbReference type="EMBL" id="AL832815">
    <property type="protein sequence ID" value="CAH56262.1"/>
    <property type="molecule type" value="mRNA"/>
</dbReference>
<dbReference type="EMBL" id="AL832490">
    <property type="protein sequence ID" value="CAH56205.1"/>
    <property type="molecule type" value="mRNA"/>
</dbReference>
<dbReference type="EMBL" id="AL162046">
    <property type="protein sequence ID" value="CAB82389.1"/>
    <property type="molecule type" value="mRNA"/>
</dbReference>
<dbReference type="EMBL" id="AL080250">
    <property type="status" value="NOT_ANNOTATED_CDS"/>
    <property type="molecule type" value="Genomic_DNA"/>
</dbReference>
<dbReference type="EMBL" id="CH471051">
    <property type="protein sequence ID" value="EAW48743.1"/>
    <property type="molecule type" value="Genomic_DNA"/>
</dbReference>
<dbReference type="EMBL" id="CH471051">
    <property type="protein sequence ID" value="EAW48744.1"/>
    <property type="molecule type" value="Genomic_DNA"/>
</dbReference>
<dbReference type="EMBL" id="CH471051">
    <property type="protein sequence ID" value="EAW48745.1"/>
    <property type="molecule type" value="Genomic_DNA"/>
</dbReference>
<dbReference type="EMBL" id="BC009006">
    <property type="protein sequence ID" value="AAH09006.1"/>
    <property type="molecule type" value="mRNA"/>
</dbReference>
<dbReference type="CCDS" id="CCDS47453.1">
    <molecule id="Q9NV96-2"/>
</dbReference>
<dbReference type="CCDS" id="CCDS4983.1">
    <molecule id="Q9NV96-1"/>
</dbReference>
<dbReference type="PIR" id="T47140">
    <property type="entry name" value="T47140"/>
</dbReference>
<dbReference type="RefSeq" id="NP_001137430.1">
    <molecule id="Q9NV96-2"/>
    <property type="nucleotide sequence ID" value="NM_001143958.2"/>
</dbReference>
<dbReference type="RefSeq" id="NP_060717.1">
    <molecule id="Q9NV96-1"/>
    <property type="nucleotide sequence ID" value="NM_018247.4"/>
</dbReference>
<dbReference type="PDB" id="6K7G">
    <property type="method" value="EM"/>
    <property type="resolution" value="3.30 A"/>
    <property type="chains" value="C=1-361"/>
</dbReference>
<dbReference type="PDB" id="6K7H">
    <property type="method" value="EM"/>
    <property type="resolution" value="3.22 A"/>
    <property type="chains" value="C=1-361"/>
</dbReference>
<dbReference type="PDB" id="6K7I">
    <property type="method" value="EM"/>
    <property type="resolution" value="3.22 A"/>
    <property type="chains" value="C=1-361"/>
</dbReference>
<dbReference type="PDB" id="6K7J">
    <property type="method" value="EM"/>
    <property type="resolution" value="3.08 A"/>
    <property type="chains" value="C=1-361"/>
</dbReference>
<dbReference type="PDB" id="6K7K">
    <property type="method" value="EM"/>
    <property type="resolution" value="3.04 A"/>
    <property type="chains" value="C=1-361"/>
</dbReference>
<dbReference type="PDB" id="6K7L">
    <property type="method" value="EM"/>
    <property type="resolution" value="2.83 A"/>
    <property type="chains" value="C=1-361"/>
</dbReference>
<dbReference type="PDB" id="6K7M">
    <property type="method" value="EM"/>
    <property type="resolution" value="2.95 A"/>
    <property type="chains" value="C=1-361"/>
</dbReference>
<dbReference type="PDB" id="6K7N">
    <property type="method" value="EM"/>
    <property type="resolution" value="2.84 A"/>
    <property type="chains" value="C=1-361"/>
</dbReference>
<dbReference type="PDB" id="6LKN">
    <property type="method" value="X-ray"/>
    <property type="resolution" value="3.90 A"/>
    <property type="chains" value="C/F/J/N=1-361"/>
</dbReference>
<dbReference type="PDB" id="7BSP">
    <property type="method" value="EM"/>
    <property type="resolution" value="4.00 A"/>
    <property type="chains" value="C=1-361"/>
</dbReference>
<dbReference type="PDB" id="7BSQ">
    <property type="method" value="EM"/>
    <property type="resolution" value="3.20 A"/>
    <property type="chains" value="C=1-361"/>
</dbReference>
<dbReference type="PDB" id="7BSS">
    <property type="method" value="EM"/>
    <property type="resolution" value="3.30 A"/>
    <property type="chains" value="C=1-361"/>
</dbReference>
<dbReference type="PDB" id="7BSU">
    <property type="method" value="EM"/>
    <property type="resolution" value="3.20 A"/>
    <property type="chains" value="C=1-361"/>
</dbReference>
<dbReference type="PDB" id="7BSV">
    <property type="method" value="EM"/>
    <property type="resolution" value="3.00 A"/>
    <property type="chains" value="C=1-361"/>
</dbReference>
<dbReference type="PDB" id="7BSW">
    <property type="method" value="EM"/>
    <property type="resolution" value="3.90 A"/>
    <property type="chains" value="C=1-361"/>
</dbReference>
<dbReference type="PDB" id="7PY4">
    <property type="method" value="EM"/>
    <property type="resolution" value="3.10 A"/>
    <property type="chains" value="B=25-351"/>
</dbReference>
<dbReference type="PDB" id="7VGI">
    <property type="method" value="EM"/>
    <property type="resolution" value="3.36 A"/>
    <property type="chains" value="A=1-361"/>
</dbReference>
<dbReference type="PDB" id="7VGJ">
    <property type="method" value="EM"/>
    <property type="resolution" value="3.98 A"/>
    <property type="chains" value="B=1-361"/>
</dbReference>
<dbReference type="PDB" id="7VSG">
    <property type="method" value="EM"/>
    <property type="resolution" value="3.90 A"/>
    <property type="chains" value="B=1-361"/>
</dbReference>
<dbReference type="PDB" id="7VSH">
    <property type="method" value="EM"/>
    <property type="resolution" value="3.40 A"/>
    <property type="chains" value="C=1-361"/>
</dbReference>
<dbReference type="PDB" id="8OX4">
    <property type="method" value="EM"/>
    <property type="resolution" value="3.40 A"/>
    <property type="chains" value="B=1-361"/>
</dbReference>
<dbReference type="PDB" id="8OX5">
    <property type="method" value="EM"/>
    <property type="resolution" value="2.90 A"/>
    <property type="chains" value="B=1-361"/>
</dbReference>
<dbReference type="PDB" id="8OX6">
    <property type="method" value="EM"/>
    <property type="resolution" value="2.39 A"/>
    <property type="chains" value="B=1-361"/>
</dbReference>
<dbReference type="PDB" id="8OX7">
    <property type="method" value="EM"/>
    <property type="resolution" value="2.56 A"/>
    <property type="chains" value="B=1-361"/>
</dbReference>
<dbReference type="PDB" id="8OX8">
    <property type="method" value="EM"/>
    <property type="resolution" value="2.98 A"/>
    <property type="chains" value="B=1-361"/>
</dbReference>
<dbReference type="PDB" id="8OX9">
    <property type="method" value="EM"/>
    <property type="resolution" value="2.72 A"/>
    <property type="chains" value="B=1-361"/>
</dbReference>
<dbReference type="PDB" id="8OXA">
    <property type="method" value="EM"/>
    <property type="resolution" value="2.76 A"/>
    <property type="chains" value="B=1-361"/>
</dbReference>
<dbReference type="PDB" id="8OXB">
    <property type="method" value="EM"/>
    <property type="resolution" value="2.99 A"/>
    <property type="chains" value="B=1-361"/>
</dbReference>
<dbReference type="PDB" id="8OXC">
    <property type="method" value="EM"/>
    <property type="resolution" value="2.58 A"/>
    <property type="chains" value="B=1-361"/>
</dbReference>
<dbReference type="PDBsum" id="6K7G"/>
<dbReference type="PDBsum" id="6K7H"/>
<dbReference type="PDBsum" id="6K7I"/>
<dbReference type="PDBsum" id="6K7J"/>
<dbReference type="PDBsum" id="6K7K"/>
<dbReference type="PDBsum" id="6K7L"/>
<dbReference type="PDBsum" id="6K7M"/>
<dbReference type="PDBsum" id="6K7N"/>
<dbReference type="PDBsum" id="6LKN"/>
<dbReference type="PDBsum" id="7BSP"/>
<dbReference type="PDBsum" id="7BSQ"/>
<dbReference type="PDBsum" id="7BSS"/>
<dbReference type="PDBsum" id="7BSU"/>
<dbReference type="PDBsum" id="7BSV"/>
<dbReference type="PDBsum" id="7BSW"/>
<dbReference type="PDBsum" id="7PY4"/>
<dbReference type="PDBsum" id="7VGI"/>
<dbReference type="PDBsum" id="7VGJ"/>
<dbReference type="PDBsum" id="7VSG"/>
<dbReference type="PDBsum" id="7VSH"/>
<dbReference type="PDBsum" id="8OX4"/>
<dbReference type="PDBsum" id="8OX5"/>
<dbReference type="PDBsum" id="8OX6"/>
<dbReference type="PDBsum" id="8OX7"/>
<dbReference type="PDBsum" id="8OX8"/>
<dbReference type="PDBsum" id="8OX9"/>
<dbReference type="PDBsum" id="8OXA"/>
<dbReference type="PDBsum" id="8OXB"/>
<dbReference type="PDBsum" id="8OXC"/>
<dbReference type="EMDB" id="EMD-13711"/>
<dbReference type="EMDB" id="EMD-17256"/>
<dbReference type="EMDB" id="EMD-17257"/>
<dbReference type="EMDB" id="EMD-17258"/>
<dbReference type="EMDB" id="EMD-17259"/>
<dbReference type="EMDB" id="EMD-17260"/>
<dbReference type="EMDB" id="EMD-17261"/>
<dbReference type="EMDB" id="EMD-17262"/>
<dbReference type="EMDB" id="EMD-17263"/>
<dbReference type="EMDB" id="EMD-17264"/>
<dbReference type="EMDB" id="EMD-30163"/>
<dbReference type="EMDB" id="EMD-30164"/>
<dbReference type="EMDB" id="EMD-30165"/>
<dbReference type="EMDB" id="EMD-30167"/>
<dbReference type="EMDB" id="EMD-30168"/>
<dbReference type="EMDB" id="EMD-30169"/>
<dbReference type="EMDB" id="EMD-31970"/>
<dbReference type="EMDB" id="EMD-31971"/>
<dbReference type="EMDB" id="EMD-32110"/>
<dbReference type="EMDB" id="EMD-32111"/>
<dbReference type="EMDB" id="EMD-9931"/>
<dbReference type="EMDB" id="EMD-9932"/>
<dbReference type="EMDB" id="EMD-9933"/>
<dbReference type="EMDB" id="EMD-9934"/>
<dbReference type="EMDB" id="EMD-9935"/>
<dbReference type="EMDB" id="EMD-9936"/>
<dbReference type="EMDB" id="EMD-9937"/>
<dbReference type="EMDB" id="EMD-9938"/>
<dbReference type="EMDB" id="EMD-9939"/>
<dbReference type="EMDB" id="EMD-9940"/>
<dbReference type="EMDB" id="EMD-9941"/>
<dbReference type="EMDB" id="EMD-9942"/>
<dbReference type="SMR" id="Q9NV96"/>
<dbReference type="BioGRID" id="120872">
    <property type="interactions" value="168"/>
</dbReference>
<dbReference type="ComplexPortal" id="CPX-6282">
    <property type="entry name" value="ATP8B1-CDC50A P4-ATPase complex"/>
</dbReference>
<dbReference type="ComplexPortal" id="CPX-6285">
    <property type="entry name" value="ATP8A1-CDC50A P4-ATPase complex"/>
</dbReference>
<dbReference type="ComplexPortal" id="CPX-6301">
    <property type="entry name" value="ATP8A2-CDC50A P4-ATPase complex"/>
</dbReference>
<dbReference type="ComplexPortal" id="CPX-6302">
    <property type="entry name" value="ATP8B2-CDC50A P4-ATPase complex"/>
</dbReference>
<dbReference type="ComplexPortal" id="CPX-6304">
    <property type="entry name" value="ATP8B3-CDC50A P4-ATPase complex"/>
</dbReference>
<dbReference type="ComplexPortal" id="CPX-6305">
    <property type="entry name" value="ATP8B4-CDC50A P4-ATPase complex"/>
</dbReference>
<dbReference type="ComplexPortal" id="CPX-6307">
    <property type="entry name" value="ATP10A-CDC50A P4-ATPase complex"/>
</dbReference>
<dbReference type="ComplexPortal" id="CPX-6308">
    <property type="entry name" value="ATP10B-CDC50A P4-ATPase complex"/>
</dbReference>
<dbReference type="ComplexPortal" id="CPX-6309">
    <property type="entry name" value="ATP10D-CDC50A P4-ATPase complex"/>
</dbReference>
<dbReference type="ComplexPortal" id="CPX-6310">
    <property type="entry name" value="ATP11A-CDC50A P4-ATPase complex"/>
</dbReference>
<dbReference type="ComplexPortal" id="CPX-6311">
    <property type="entry name" value="ATP11B-CDC50A P4-ATPase complex"/>
</dbReference>
<dbReference type="ComplexPortal" id="CPX-6312">
    <property type="entry name" value="ATP11C-CDC50A P4-ATPase complex"/>
</dbReference>
<dbReference type="FunCoup" id="Q9NV96">
    <property type="interactions" value="2534"/>
</dbReference>
<dbReference type="IntAct" id="Q9NV96">
    <property type="interactions" value="112"/>
</dbReference>
<dbReference type="MINT" id="Q9NV96"/>
<dbReference type="STRING" id="9606.ENSP00000230461"/>
<dbReference type="TCDB" id="1.A.17.1.30">
    <property type="family name" value="the calcium-dependent chloride channel (ca-clc) family"/>
</dbReference>
<dbReference type="TCDB" id="8.A.27.1.5">
    <property type="family name" value="the cdc50 p-type atpase lipid flippase subunit (cdc50) family"/>
</dbReference>
<dbReference type="GlyCosmos" id="Q9NV96">
    <property type="glycosylation" value="4 sites, No reported glycans"/>
</dbReference>
<dbReference type="GlyGen" id="Q9NV96">
    <property type="glycosylation" value="6 sites, 34 N-linked glycans (3 sites), 2 O-linked glycans (2 sites)"/>
</dbReference>
<dbReference type="iPTMnet" id="Q9NV96"/>
<dbReference type="PhosphoSitePlus" id="Q9NV96"/>
<dbReference type="SwissPalm" id="Q9NV96"/>
<dbReference type="BioMuta" id="TMEM30A"/>
<dbReference type="DMDM" id="74752991"/>
<dbReference type="jPOST" id="Q9NV96"/>
<dbReference type="MassIVE" id="Q9NV96"/>
<dbReference type="PaxDb" id="9606-ENSP00000230461"/>
<dbReference type="PeptideAtlas" id="Q9NV96"/>
<dbReference type="ProteomicsDB" id="82763">
    <molecule id="Q9NV96-1"/>
</dbReference>
<dbReference type="ProteomicsDB" id="82764">
    <molecule id="Q9NV96-2"/>
</dbReference>
<dbReference type="ProteomicsDB" id="82765">
    <molecule id="Q9NV96-3"/>
</dbReference>
<dbReference type="Pumba" id="Q9NV96"/>
<dbReference type="Antibodypedia" id="31507">
    <property type="antibodies" value="61 antibodies from 23 providers"/>
</dbReference>
<dbReference type="DNASU" id="55754"/>
<dbReference type="Ensembl" id="ENST00000230461.11">
    <molecule id="Q9NV96-1"/>
    <property type="protein sequence ID" value="ENSP00000230461.6"/>
    <property type="gene ID" value="ENSG00000112697.17"/>
</dbReference>
<dbReference type="Ensembl" id="ENST00000370050.9">
    <molecule id="Q9NV96-3"/>
    <property type="protein sequence ID" value="ENSP00000359067.5"/>
    <property type="gene ID" value="ENSG00000112697.17"/>
</dbReference>
<dbReference type="Ensembl" id="ENST00000475111.6">
    <molecule id="Q9NV96-2"/>
    <property type="protein sequence ID" value="ENSP00000431007.1"/>
    <property type="gene ID" value="ENSG00000112697.17"/>
</dbReference>
<dbReference type="Ensembl" id="ENST00000674151.1">
    <molecule id="Q9NV96-3"/>
    <property type="protein sequence ID" value="ENSP00000500998.1"/>
    <property type="gene ID" value="ENSG00000112697.17"/>
</dbReference>
<dbReference type="GeneID" id="55754"/>
<dbReference type="KEGG" id="hsa:55754"/>
<dbReference type="MANE-Select" id="ENST00000230461.11">
    <property type="protein sequence ID" value="ENSP00000230461.6"/>
    <property type="RefSeq nucleotide sequence ID" value="NM_018247.4"/>
    <property type="RefSeq protein sequence ID" value="NP_060717.1"/>
</dbReference>
<dbReference type="UCSC" id="uc003phw.3">
    <molecule id="Q9NV96-1"/>
    <property type="organism name" value="human"/>
</dbReference>
<dbReference type="AGR" id="HGNC:16667"/>
<dbReference type="CTD" id="55754"/>
<dbReference type="DisGeNET" id="55754"/>
<dbReference type="GeneCards" id="TMEM30A"/>
<dbReference type="HGNC" id="HGNC:16667">
    <property type="gene designation" value="TMEM30A"/>
</dbReference>
<dbReference type="HPA" id="ENSG00000112697">
    <property type="expression patterns" value="Low tissue specificity"/>
</dbReference>
<dbReference type="MalaCards" id="TMEM30A"/>
<dbReference type="MIM" id="611028">
    <property type="type" value="gene"/>
</dbReference>
<dbReference type="neXtProt" id="NX_Q9NV96"/>
<dbReference type="OpenTargets" id="ENSG00000112697"/>
<dbReference type="PharmGKB" id="PA134936902"/>
<dbReference type="VEuPathDB" id="HostDB:ENSG00000112697"/>
<dbReference type="eggNOG" id="KOG2952">
    <property type="taxonomic scope" value="Eukaryota"/>
</dbReference>
<dbReference type="GeneTree" id="ENSGT00390000004660"/>
<dbReference type="HOGENOM" id="CLU_025025_1_0_1"/>
<dbReference type="InParanoid" id="Q9NV96"/>
<dbReference type="OMA" id="IPWSMFN"/>
<dbReference type="OrthoDB" id="340608at2759"/>
<dbReference type="PAN-GO" id="Q9NV96">
    <property type="GO annotations" value="4 GO annotations based on evolutionary models"/>
</dbReference>
<dbReference type="PhylomeDB" id="Q9NV96"/>
<dbReference type="TreeFam" id="TF300873"/>
<dbReference type="PathwayCommons" id="Q9NV96"/>
<dbReference type="Reactome" id="R-HSA-6798695">
    <property type="pathway name" value="Neutrophil degranulation"/>
</dbReference>
<dbReference type="SignaLink" id="Q9NV96"/>
<dbReference type="BioGRID-ORCS" id="55754">
    <property type="hits" value="68 hits in 1171 CRISPR screens"/>
</dbReference>
<dbReference type="ChiTaRS" id="TMEM30A">
    <property type="organism name" value="human"/>
</dbReference>
<dbReference type="GenomeRNAi" id="55754"/>
<dbReference type="Pharos" id="Q9NV96">
    <property type="development level" value="Tbio"/>
</dbReference>
<dbReference type="PRO" id="PR:Q9NV96"/>
<dbReference type="Proteomes" id="UP000005640">
    <property type="component" value="Chromosome 6"/>
</dbReference>
<dbReference type="RNAct" id="Q9NV96">
    <property type="molecule type" value="protein"/>
</dbReference>
<dbReference type="Bgee" id="ENSG00000112697">
    <property type="expression patterns" value="Expressed in tendon of biceps brachii and 211 other cell types or tissues"/>
</dbReference>
<dbReference type="ExpressionAtlas" id="Q9NV96">
    <property type="expression patterns" value="baseline and differential"/>
</dbReference>
<dbReference type="GO" id="GO:0016324">
    <property type="term" value="C:apical plasma membrane"/>
    <property type="evidence" value="ECO:0007669"/>
    <property type="project" value="UniProtKB-SubCell"/>
</dbReference>
<dbReference type="GO" id="GO:0035577">
    <property type="term" value="C:azurophil granule membrane"/>
    <property type="evidence" value="ECO:0000304"/>
    <property type="project" value="Reactome"/>
</dbReference>
<dbReference type="GO" id="GO:0031901">
    <property type="term" value="C:early endosome membrane"/>
    <property type="evidence" value="ECO:0000314"/>
    <property type="project" value="ComplexPortal"/>
</dbReference>
<dbReference type="GO" id="GO:0005783">
    <property type="term" value="C:endoplasmic reticulum"/>
    <property type="evidence" value="ECO:0000314"/>
    <property type="project" value="UniProtKB"/>
</dbReference>
<dbReference type="GO" id="GO:0005794">
    <property type="term" value="C:Golgi apparatus"/>
    <property type="evidence" value="ECO:0000318"/>
    <property type="project" value="GO_Central"/>
</dbReference>
<dbReference type="GO" id="GO:0031902">
    <property type="term" value="C:late endosome membrane"/>
    <property type="evidence" value="ECO:0000314"/>
    <property type="project" value="ComplexPortal"/>
</dbReference>
<dbReference type="GO" id="GO:0016020">
    <property type="term" value="C:membrane"/>
    <property type="evidence" value="ECO:0000314"/>
    <property type="project" value="ComplexPortal"/>
</dbReference>
<dbReference type="GO" id="GO:1990531">
    <property type="term" value="C:phospholipid-translocating ATPase complex"/>
    <property type="evidence" value="ECO:0000314"/>
    <property type="project" value="UniProtKB"/>
</dbReference>
<dbReference type="GO" id="GO:0005886">
    <property type="term" value="C:plasma membrane"/>
    <property type="evidence" value="ECO:0000314"/>
    <property type="project" value="BHF-UCL"/>
</dbReference>
<dbReference type="GO" id="GO:0035579">
    <property type="term" value="C:specific granule membrane"/>
    <property type="evidence" value="ECO:0000304"/>
    <property type="project" value="Reactome"/>
</dbReference>
<dbReference type="GO" id="GO:0030658">
    <property type="term" value="C:transport vesicle membrane"/>
    <property type="evidence" value="ECO:0007669"/>
    <property type="project" value="UniProtKB-SubCell"/>
</dbReference>
<dbReference type="GO" id="GO:0015247">
    <property type="term" value="F:aminophospholipid flippase activity"/>
    <property type="evidence" value="ECO:0000314"/>
    <property type="project" value="BHF-UCL"/>
</dbReference>
<dbReference type="GO" id="GO:0005198">
    <property type="term" value="F:structural molecule activity"/>
    <property type="evidence" value="ECO:0000314"/>
    <property type="project" value="FlyBase"/>
</dbReference>
<dbReference type="GO" id="GO:0015917">
    <property type="term" value="P:aminophospholipid transport"/>
    <property type="evidence" value="ECO:0000314"/>
    <property type="project" value="BHF-UCL"/>
</dbReference>
<dbReference type="GO" id="GO:0045332">
    <property type="term" value="P:phospholipid translocation"/>
    <property type="evidence" value="ECO:0000314"/>
    <property type="project" value="UniProtKB"/>
</dbReference>
<dbReference type="GO" id="GO:0010976">
    <property type="term" value="P:positive regulation of neuron projection development"/>
    <property type="evidence" value="ECO:0007669"/>
    <property type="project" value="Ensembl"/>
</dbReference>
<dbReference type="GO" id="GO:0061092">
    <property type="term" value="P:positive regulation of phospholipid translocation"/>
    <property type="evidence" value="ECO:0000314"/>
    <property type="project" value="UniProtKB"/>
</dbReference>
<dbReference type="GO" id="GO:0070863">
    <property type="term" value="P:positive regulation of protein exit from endoplasmic reticulum"/>
    <property type="evidence" value="ECO:0000314"/>
    <property type="project" value="UniProtKB"/>
</dbReference>
<dbReference type="GO" id="GO:0036010">
    <property type="term" value="P:protein localization to endosome"/>
    <property type="evidence" value="ECO:0000315"/>
    <property type="project" value="UniProtKB"/>
</dbReference>
<dbReference type="GO" id="GO:0006855">
    <property type="term" value="P:xenobiotic transmembrane transport"/>
    <property type="evidence" value="ECO:0000314"/>
    <property type="project" value="UniProtKB"/>
</dbReference>
<dbReference type="InterPro" id="IPR005045">
    <property type="entry name" value="CDC50/LEM3_fam"/>
</dbReference>
<dbReference type="PANTHER" id="PTHR10926">
    <property type="entry name" value="CELL CYCLE CONTROL PROTEIN 50"/>
    <property type="match status" value="1"/>
</dbReference>
<dbReference type="PANTHER" id="PTHR10926:SF17">
    <property type="entry name" value="CELL CYCLE CONTROL PROTEIN 50A"/>
    <property type="match status" value="1"/>
</dbReference>
<dbReference type="Pfam" id="PF03381">
    <property type="entry name" value="CDC50"/>
    <property type="match status" value="1"/>
</dbReference>
<dbReference type="PIRSF" id="PIRSF015840">
    <property type="entry name" value="DUF284_TM_euk"/>
    <property type="match status" value="1"/>
</dbReference>
<proteinExistence type="evidence at protein level"/>
<gene>
    <name evidence="20" type="primary">TMEM30A</name>
    <name type="synonym">C6orf67</name>
    <name type="synonym">CDC50A</name>
</gene>
<organism>
    <name type="scientific">Homo sapiens</name>
    <name type="common">Human</name>
    <dbReference type="NCBI Taxonomy" id="9606"/>
    <lineage>
        <taxon>Eukaryota</taxon>
        <taxon>Metazoa</taxon>
        <taxon>Chordata</taxon>
        <taxon>Craniata</taxon>
        <taxon>Vertebrata</taxon>
        <taxon>Euteleostomi</taxon>
        <taxon>Mammalia</taxon>
        <taxon>Eutheria</taxon>
        <taxon>Euarchontoglires</taxon>
        <taxon>Primates</taxon>
        <taxon>Haplorrhini</taxon>
        <taxon>Catarrhini</taxon>
        <taxon>Hominidae</taxon>
        <taxon>Homo</taxon>
    </lineage>
</organism>
<feature type="initiator methionine" description="Removed" evidence="29">
    <location>
        <position position="1"/>
    </location>
</feature>
<feature type="chain" id="PRO_0000244469" description="Cell cycle control protein 50A">
    <location>
        <begin position="2"/>
        <end position="361"/>
    </location>
</feature>
<feature type="topological domain" description="Cytoplasmic" evidence="2">
    <location>
        <begin position="2"/>
        <end position="49"/>
    </location>
</feature>
<feature type="transmembrane region" description="Helical" evidence="2">
    <location>
        <begin position="50"/>
        <end position="70"/>
    </location>
</feature>
<feature type="topological domain" description="Exoplasmic loop" evidence="2">
    <location>
        <begin position="71"/>
        <end position="325"/>
    </location>
</feature>
<feature type="transmembrane region" description="Helical" evidence="2">
    <location>
        <begin position="326"/>
        <end position="346"/>
    </location>
</feature>
<feature type="topological domain" description="Cytoplasmic" evidence="2">
    <location>
        <begin position="347"/>
        <end position="361"/>
    </location>
</feature>
<feature type="region of interest" description="Disordered" evidence="3">
    <location>
        <begin position="1"/>
        <end position="29"/>
    </location>
</feature>
<feature type="modified residue" description="N-acetylalanine" evidence="29">
    <location>
        <position position="2"/>
    </location>
</feature>
<feature type="glycosylation site" description="N-linked (GlcNAc...) asparagine" evidence="14 21 22 23 24 25 26 27">
    <location>
        <position position="107"/>
    </location>
</feature>
<feature type="glycosylation site" description="N-linked (GlcNAc...) asparagine" evidence="2 14 21 22 23 24 25 26 27">
    <location>
        <position position="180"/>
    </location>
</feature>
<feature type="glycosylation site" description="N-linked (GlcNAc...) asparagine" evidence="5">
    <location>
        <position position="190"/>
    </location>
</feature>
<feature type="glycosylation site" description="N-linked (GlcNAc...) asparagine" evidence="4 14 21 22 23 24 25 26 27">
    <location>
        <position position="294"/>
    </location>
</feature>
<feature type="disulfide bond" evidence="14 21 22 23 24 25 26 27 28">
    <location>
        <begin position="91"/>
        <end position="104"/>
    </location>
</feature>
<feature type="disulfide bond" evidence="14 21 22 23 24 25 26 27 28">
    <location>
        <begin position="94"/>
        <end position="102"/>
    </location>
</feature>
<feature type="disulfide bond" evidence="14 21 22 23 24 25 26 27">
    <location>
        <begin position="157"/>
        <end position="171"/>
    </location>
</feature>
<feature type="splice variant" id="VSP_019567" description="In isoform 3." evidence="18">
    <location>
        <begin position="1"/>
        <end position="119"/>
    </location>
</feature>
<feature type="splice variant" id="VSP_019568" description="In isoform 2." evidence="16 17">
    <location>
        <begin position="79"/>
        <end position="114"/>
    </location>
</feature>
<feature type="mutagenesis site" description="Decreases PS- and PE-dependent ATPase activity of ATP11C:TMEM30A; when associated with A-133 and A-136." evidence="15">
    <original>R</original>
    <variation>A</variation>
    <location>
        <position position="132"/>
    </location>
</feature>
<feature type="mutagenesis site" description="Decreases PS- and PE-dependent ATPase activity of ATP11C:TMEM30A; when associated with A-132 and A-136." evidence="15">
    <original>R</original>
    <variation>A</variation>
    <location>
        <position position="133"/>
    </location>
</feature>
<feature type="mutagenesis site" description="Decreases PS- and PE-dependent ATPase activity of ATP11C:TMEM30A; when associated with A-132 and A-133." evidence="15">
    <original>K</original>
    <variation>A</variation>
    <location>
        <position position="136"/>
    </location>
</feature>
<feature type="turn" evidence="34">
    <location>
        <begin position="32"/>
        <end position="36"/>
    </location>
</feature>
<feature type="turn" evidence="34">
    <location>
        <begin position="47"/>
        <end position="49"/>
    </location>
</feature>
<feature type="helix" evidence="34">
    <location>
        <begin position="50"/>
        <end position="74"/>
    </location>
</feature>
<feature type="strand" evidence="34">
    <location>
        <begin position="78"/>
        <end position="81"/>
    </location>
</feature>
<feature type="strand" evidence="35">
    <location>
        <begin position="86"/>
        <end position="89"/>
    </location>
</feature>
<feature type="helix" evidence="34">
    <location>
        <begin position="92"/>
        <end position="95"/>
    </location>
</feature>
<feature type="strand" evidence="34">
    <location>
        <begin position="98"/>
        <end position="100"/>
    </location>
</feature>
<feature type="strand" evidence="34">
    <location>
        <begin position="106"/>
        <end position="112"/>
    </location>
</feature>
<feature type="strand" evidence="34">
    <location>
        <begin position="118"/>
        <end position="126"/>
    </location>
</feature>
<feature type="helix" evidence="34">
    <location>
        <begin position="132"/>
        <end position="136"/>
    </location>
</feature>
<feature type="helix" evidence="34">
    <location>
        <begin position="140"/>
        <end position="143"/>
    </location>
</feature>
<feature type="helix" evidence="34">
    <location>
        <begin position="147"/>
        <end position="151"/>
    </location>
</feature>
<feature type="helix" evidence="34">
    <location>
        <begin position="155"/>
        <end position="160"/>
    </location>
</feature>
<feature type="strand" evidence="34">
    <location>
        <begin position="161"/>
        <end position="168"/>
    </location>
</feature>
<feature type="helix" evidence="34">
    <location>
        <begin position="173"/>
        <end position="176"/>
    </location>
</feature>
<feature type="strand" evidence="34">
    <location>
        <begin position="182"/>
        <end position="188"/>
    </location>
</feature>
<feature type="strand" evidence="31">
    <location>
        <begin position="190"/>
        <end position="192"/>
    </location>
</feature>
<feature type="strand" evidence="34">
    <location>
        <begin position="194"/>
        <end position="196"/>
    </location>
</feature>
<feature type="strand" evidence="33">
    <location>
        <begin position="202"/>
        <end position="205"/>
    </location>
</feature>
<feature type="helix" evidence="34">
    <location>
        <begin position="207"/>
        <end position="211"/>
    </location>
</feature>
<feature type="strand" evidence="32">
    <location>
        <begin position="213"/>
        <end position="215"/>
    </location>
</feature>
<feature type="strand" evidence="30">
    <location>
        <begin position="218"/>
        <end position="221"/>
    </location>
</feature>
<feature type="helix" evidence="34">
    <location>
        <begin position="223"/>
        <end position="226"/>
    </location>
</feature>
<feature type="turn" evidence="35">
    <location>
        <begin position="227"/>
        <end position="229"/>
    </location>
</feature>
<feature type="strand" evidence="34">
    <location>
        <begin position="240"/>
        <end position="243"/>
    </location>
</feature>
<feature type="helix" evidence="35">
    <location>
        <begin position="247"/>
        <end position="249"/>
    </location>
</feature>
<feature type="helix" evidence="34">
    <location>
        <begin position="251"/>
        <end position="253"/>
    </location>
</feature>
<feature type="helix" evidence="34">
    <location>
        <begin position="255"/>
        <end position="261"/>
    </location>
</feature>
<feature type="strand" evidence="34">
    <location>
        <begin position="264"/>
        <end position="276"/>
    </location>
</feature>
<feature type="strand" evidence="34">
    <location>
        <begin position="280"/>
        <end position="283"/>
    </location>
</feature>
<feature type="strand" evidence="34">
    <location>
        <begin position="288"/>
        <end position="297"/>
    </location>
</feature>
<feature type="turn" evidence="34">
    <location>
        <begin position="302"/>
        <end position="305"/>
    </location>
</feature>
<feature type="strand" evidence="34">
    <location>
        <begin position="307"/>
        <end position="314"/>
    </location>
</feature>
<feature type="strand" evidence="34">
    <location>
        <begin position="317"/>
        <end position="320"/>
    </location>
</feature>
<feature type="helix" evidence="34">
    <location>
        <begin position="323"/>
        <end position="349"/>
    </location>
</feature>
<keyword id="KW-0002">3D-structure</keyword>
<keyword id="KW-0007">Acetylation</keyword>
<keyword id="KW-0025">Alternative splicing</keyword>
<keyword id="KW-1003">Cell membrane</keyword>
<keyword id="KW-0968">Cytoplasmic vesicle</keyword>
<keyword id="KW-1015">Disulfide bond</keyword>
<keyword id="KW-0325">Glycoprotein</keyword>
<keyword id="KW-0333">Golgi apparatus</keyword>
<keyword id="KW-0445">Lipid transport</keyword>
<keyword id="KW-0472">Membrane</keyword>
<keyword id="KW-1267">Proteomics identification</keyword>
<keyword id="KW-1185">Reference proteome</keyword>
<keyword id="KW-0812">Transmembrane</keyword>
<keyword id="KW-1133">Transmembrane helix</keyword>
<keyword id="KW-0813">Transport</keyword>
<reference key="1">
    <citation type="journal article" date="2004" name="Nat. Genet.">
        <title>Complete sequencing and characterization of 21,243 full-length human cDNAs.</title>
        <authorList>
            <person name="Ota T."/>
            <person name="Suzuki Y."/>
            <person name="Nishikawa T."/>
            <person name="Otsuki T."/>
            <person name="Sugiyama T."/>
            <person name="Irie R."/>
            <person name="Wakamatsu A."/>
            <person name="Hayashi K."/>
            <person name="Sato H."/>
            <person name="Nagai K."/>
            <person name="Kimura K."/>
            <person name="Makita H."/>
            <person name="Sekine M."/>
            <person name="Obayashi M."/>
            <person name="Nishi T."/>
            <person name="Shibahara T."/>
            <person name="Tanaka T."/>
            <person name="Ishii S."/>
            <person name="Yamamoto J."/>
            <person name="Saito K."/>
            <person name="Kawai Y."/>
            <person name="Isono Y."/>
            <person name="Nakamura Y."/>
            <person name="Nagahari K."/>
            <person name="Murakami K."/>
            <person name="Yasuda T."/>
            <person name="Iwayanagi T."/>
            <person name="Wagatsuma M."/>
            <person name="Shiratori A."/>
            <person name="Sudo H."/>
            <person name="Hosoiri T."/>
            <person name="Kaku Y."/>
            <person name="Kodaira H."/>
            <person name="Kondo H."/>
            <person name="Sugawara M."/>
            <person name="Takahashi M."/>
            <person name="Kanda K."/>
            <person name="Yokoi T."/>
            <person name="Furuya T."/>
            <person name="Kikkawa E."/>
            <person name="Omura Y."/>
            <person name="Abe K."/>
            <person name="Kamihara K."/>
            <person name="Katsuta N."/>
            <person name="Sato K."/>
            <person name="Tanikawa M."/>
            <person name="Yamazaki M."/>
            <person name="Ninomiya K."/>
            <person name="Ishibashi T."/>
            <person name="Yamashita H."/>
            <person name="Murakawa K."/>
            <person name="Fujimori K."/>
            <person name="Tanai H."/>
            <person name="Kimata M."/>
            <person name="Watanabe M."/>
            <person name="Hiraoka S."/>
            <person name="Chiba Y."/>
            <person name="Ishida S."/>
            <person name="Ono Y."/>
            <person name="Takiguchi S."/>
            <person name="Watanabe S."/>
            <person name="Yosida M."/>
            <person name="Hotuta T."/>
            <person name="Kusano J."/>
            <person name="Kanehori K."/>
            <person name="Takahashi-Fujii A."/>
            <person name="Hara H."/>
            <person name="Tanase T.-O."/>
            <person name="Nomura Y."/>
            <person name="Togiya S."/>
            <person name="Komai F."/>
            <person name="Hara R."/>
            <person name="Takeuchi K."/>
            <person name="Arita M."/>
            <person name="Imose N."/>
            <person name="Musashino K."/>
            <person name="Yuuki H."/>
            <person name="Oshima A."/>
            <person name="Sasaki N."/>
            <person name="Aotsuka S."/>
            <person name="Yoshikawa Y."/>
            <person name="Matsunawa H."/>
            <person name="Ichihara T."/>
            <person name="Shiohata N."/>
            <person name="Sano S."/>
            <person name="Moriya S."/>
            <person name="Momiyama H."/>
            <person name="Satoh N."/>
            <person name="Takami S."/>
            <person name="Terashima Y."/>
            <person name="Suzuki O."/>
            <person name="Nakagawa S."/>
            <person name="Senoh A."/>
            <person name="Mizoguchi H."/>
            <person name="Goto Y."/>
            <person name="Shimizu F."/>
            <person name="Wakebe H."/>
            <person name="Hishigaki H."/>
            <person name="Watanabe T."/>
            <person name="Sugiyama A."/>
            <person name="Takemoto M."/>
            <person name="Kawakami B."/>
            <person name="Yamazaki M."/>
            <person name="Watanabe K."/>
            <person name="Kumagai A."/>
            <person name="Itakura S."/>
            <person name="Fukuzumi Y."/>
            <person name="Fujimori Y."/>
            <person name="Komiyama M."/>
            <person name="Tashiro H."/>
            <person name="Tanigami A."/>
            <person name="Fujiwara T."/>
            <person name="Ono T."/>
            <person name="Yamada K."/>
            <person name="Fujii Y."/>
            <person name="Ozaki K."/>
            <person name="Hirao M."/>
            <person name="Ohmori Y."/>
            <person name="Kawabata A."/>
            <person name="Hikiji T."/>
            <person name="Kobatake N."/>
            <person name="Inagaki H."/>
            <person name="Ikema Y."/>
            <person name="Okamoto S."/>
            <person name="Okitani R."/>
            <person name="Kawakami T."/>
            <person name="Noguchi S."/>
            <person name="Itoh T."/>
            <person name="Shigeta K."/>
            <person name="Senba T."/>
            <person name="Matsumura K."/>
            <person name="Nakajima Y."/>
            <person name="Mizuno T."/>
            <person name="Morinaga M."/>
            <person name="Sasaki M."/>
            <person name="Togashi T."/>
            <person name="Oyama M."/>
            <person name="Hata H."/>
            <person name="Watanabe M."/>
            <person name="Komatsu T."/>
            <person name="Mizushima-Sugano J."/>
            <person name="Satoh T."/>
            <person name="Shirai Y."/>
            <person name="Takahashi Y."/>
            <person name="Nakagawa K."/>
            <person name="Okumura K."/>
            <person name="Nagase T."/>
            <person name="Nomura N."/>
            <person name="Kikuchi H."/>
            <person name="Masuho Y."/>
            <person name="Yamashita R."/>
            <person name="Nakai K."/>
            <person name="Yada T."/>
            <person name="Nakamura Y."/>
            <person name="Ohara O."/>
            <person name="Isogai T."/>
            <person name="Sugano S."/>
        </authorList>
    </citation>
    <scope>NUCLEOTIDE SEQUENCE [LARGE SCALE MRNA] (ISOFORMS 1 AND 2)</scope>
    <source>
        <tissue>Trachea</tissue>
    </source>
</reference>
<reference key="2">
    <citation type="journal article" date="2007" name="BMC Genomics">
        <title>The full-ORF clone resource of the German cDNA consortium.</title>
        <authorList>
            <person name="Bechtel S."/>
            <person name="Rosenfelder H."/>
            <person name="Duda A."/>
            <person name="Schmidt C.P."/>
            <person name="Ernst U."/>
            <person name="Wellenreuther R."/>
            <person name="Mehrle A."/>
            <person name="Schuster C."/>
            <person name="Bahr A."/>
            <person name="Bloecker H."/>
            <person name="Heubner D."/>
            <person name="Hoerlein A."/>
            <person name="Michel G."/>
            <person name="Wedler H."/>
            <person name="Koehrer K."/>
            <person name="Ottenwaelder B."/>
            <person name="Poustka A."/>
            <person name="Wiemann S."/>
            <person name="Schupp I."/>
        </authorList>
    </citation>
    <scope>NUCLEOTIDE SEQUENCE [LARGE SCALE MRNA] (ISOFORMS 1 AND 3)</scope>
    <source>
        <tissue>Amygdala</tissue>
        <tissue>Lymph node</tissue>
        <tissue>Testis</tissue>
    </source>
</reference>
<reference key="3">
    <citation type="journal article" date="2003" name="Nature">
        <title>The DNA sequence and analysis of human chromosome 6.</title>
        <authorList>
            <person name="Mungall A.J."/>
            <person name="Palmer S.A."/>
            <person name="Sims S.K."/>
            <person name="Edwards C.A."/>
            <person name="Ashurst J.L."/>
            <person name="Wilming L."/>
            <person name="Jones M.C."/>
            <person name="Horton R."/>
            <person name="Hunt S.E."/>
            <person name="Scott C.E."/>
            <person name="Gilbert J.G.R."/>
            <person name="Clamp M.E."/>
            <person name="Bethel G."/>
            <person name="Milne S."/>
            <person name="Ainscough R."/>
            <person name="Almeida J.P."/>
            <person name="Ambrose K.D."/>
            <person name="Andrews T.D."/>
            <person name="Ashwell R.I.S."/>
            <person name="Babbage A.K."/>
            <person name="Bagguley C.L."/>
            <person name="Bailey J."/>
            <person name="Banerjee R."/>
            <person name="Barker D.J."/>
            <person name="Barlow K.F."/>
            <person name="Bates K."/>
            <person name="Beare D.M."/>
            <person name="Beasley H."/>
            <person name="Beasley O."/>
            <person name="Bird C.P."/>
            <person name="Blakey S.E."/>
            <person name="Bray-Allen S."/>
            <person name="Brook J."/>
            <person name="Brown A.J."/>
            <person name="Brown J.Y."/>
            <person name="Burford D.C."/>
            <person name="Burrill W."/>
            <person name="Burton J."/>
            <person name="Carder C."/>
            <person name="Carter N.P."/>
            <person name="Chapman J.C."/>
            <person name="Clark S.Y."/>
            <person name="Clark G."/>
            <person name="Clee C.M."/>
            <person name="Clegg S."/>
            <person name="Cobley V."/>
            <person name="Collier R.E."/>
            <person name="Collins J.E."/>
            <person name="Colman L.K."/>
            <person name="Corby N.R."/>
            <person name="Coville G.J."/>
            <person name="Culley K.M."/>
            <person name="Dhami P."/>
            <person name="Davies J."/>
            <person name="Dunn M."/>
            <person name="Earthrowl M.E."/>
            <person name="Ellington A.E."/>
            <person name="Evans K.A."/>
            <person name="Faulkner L."/>
            <person name="Francis M.D."/>
            <person name="Frankish A."/>
            <person name="Frankland J."/>
            <person name="French L."/>
            <person name="Garner P."/>
            <person name="Garnett J."/>
            <person name="Ghori M.J."/>
            <person name="Gilby L.M."/>
            <person name="Gillson C.J."/>
            <person name="Glithero R.J."/>
            <person name="Grafham D.V."/>
            <person name="Grant M."/>
            <person name="Gribble S."/>
            <person name="Griffiths C."/>
            <person name="Griffiths M.N.D."/>
            <person name="Hall R."/>
            <person name="Halls K.S."/>
            <person name="Hammond S."/>
            <person name="Harley J.L."/>
            <person name="Hart E.A."/>
            <person name="Heath P.D."/>
            <person name="Heathcott R."/>
            <person name="Holmes S.J."/>
            <person name="Howden P.J."/>
            <person name="Howe K.L."/>
            <person name="Howell G.R."/>
            <person name="Huckle E."/>
            <person name="Humphray S.J."/>
            <person name="Humphries M.D."/>
            <person name="Hunt A.R."/>
            <person name="Johnson C.M."/>
            <person name="Joy A.A."/>
            <person name="Kay M."/>
            <person name="Keenan S.J."/>
            <person name="Kimberley A.M."/>
            <person name="King A."/>
            <person name="Laird G.K."/>
            <person name="Langford C."/>
            <person name="Lawlor S."/>
            <person name="Leongamornlert D.A."/>
            <person name="Leversha M."/>
            <person name="Lloyd C.R."/>
            <person name="Lloyd D.M."/>
            <person name="Loveland J.E."/>
            <person name="Lovell J."/>
            <person name="Martin S."/>
            <person name="Mashreghi-Mohammadi M."/>
            <person name="Maslen G.L."/>
            <person name="Matthews L."/>
            <person name="McCann O.T."/>
            <person name="McLaren S.J."/>
            <person name="McLay K."/>
            <person name="McMurray A."/>
            <person name="Moore M.J.F."/>
            <person name="Mullikin J.C."/>
            <person name="Niblett D."/>
            <person name="Nickerson T."/>
            <person name="Novik K.L."/>
            <person name="Oliver K."/>
            <person name="Overton-Larty E.K."/>
            <person name="Parker A."/>
            <person name="Patel R."/>
            <person name="Pearce A.V."/>
            <person name="Peck A.I."/>
            <person name="Phillimore B.J.C.T."/>
            <person name="Phillips S."/>
            <person name="Plumb R.W."/>
            <person name="Porter K.M."/>
            <person name="Ramsey Y."/>
            <person name="Ranby S.A."/>
            <person name="Rice C.M."/>
            <person name="Ross M.T."/>
            <person name="Searle S.M."/>
            <person name="Sehra H.K."/>
            <person name="Sheridan E."/>
            <person name="Skuce C.D."/>
            <person name="Smith S."/>
            <person name="Smith M."/>
            <person name="Spraggon L."/>
            <person name="Squares S.L."/>
            <person name="Steward C.A."/>
            <person name="Sycamore N."/>
            <person name="Tamlyn-Hall G."/>
            <person name="Tester J."/>
            <person name="Theaker A.J."/>
            <person name="Thomas D.W."/>
            <person name="Thorpe A."/>
            <person name="Tracey A."/>
            <person name="Tromans A."/>
            <person name="Tubby B."/>
            <person name="Wall M."/>
            <person name="Wallis J.M."/>
            <person name="West A.P."/>
            <person name="White S.S."/>
            <person name="Whitehead S.L."/>
            <person name="Whittaker H."/>
            <person name="Wild A."/>
            <person name="Willey D.J."/>
            <person name="Wilmer T.E."/>
            <person name="Wood J.M."/>
            <person name="Wray P.W."/>
            <person name="Wyatt J.C."/>
            <person name="Young L."/>
            <person name="Younger R.M."/>
            <person name="Bentley D.R."/>
            <person name="Coulson A."/>
            <person name="Durbin R.M."/>
            <person name="Hubbard T."/>
            <person name="Sulston J.E."/>
            <person name="Dunham I."/>
            <person name="Rogers J."/>
            <person name="Beck S."/>
        </authorList>
    </citation>
    <scope>NUCLEOTIDE SEQUENCE [LARGE SCALE GENOMIC DNA]</scope>
</reference>
<reference key="4">
    <citation type="submission" date="2005-09" db="EMBL/GenBank/DDBJ databases">
        <authorList>
            <person name="Mural R.J."/>
            <person name="Istrail S."/>
            <person name="Sutton G.G."/>
            <person name="Florea L."/>
            <person name="Halpern A.L."/>
            <person name="Mobarry C.M."/>
            <person name="Lippert R."/>
            <person name="Walenz B."/>
            <person name="Shatkay H."/>
            <person name="Dew I."/>
            <person name="Miller J.R."/>
            <person name="Flanigan M.J."/>
            <person name="Edwards N.J."/>
            <person name="Bolanos R."/>
            <person name="Fasulo D."/>
            <person name="Halldorsson B.V."/>
            <person name="Hannenhalli S."/>
            <person name="Turner R."/>
            <person name="Yooseph S."/>
            <person name="Lu F."/>
            <person name="Nusskern D.R."/>
            <person name="Shue B.C."/>
            <person name="Zheng X.H."/>
            <person name="Zhong F."/>
            <person name="Delcher A.L."/>
            <person name="Huson D.H."/>
            <person name="Kravitz S.A."/>
            <person name="Mouchard L."/>
            <person name="Reinert K."/>
            <person name="Remington K.A."/>
            <person name="Clark A.G."/>
            <person name="Waterman M.S."/>
            <person name="Eichler E.E."/>
            <person name="Adams M.D."/>
            <person name="Hunkapiller M.W."/>
            <person name="Myers E.W."/>
            <person name="Venter J.C."/>
        </authorList>
    </citation>
    <scope>NUCLEOTIDE SEQUENCE [LARGE SCALE GENOMIC DNA]</scope>
</reference>
<reference key="5">
    <citation type="journal article" date="2004" name="Genome Res.">
        <title>The status, quality, and expansion of the NIH full-length cDNA project: the Mammalian Gene Collection (MGC).</title>
        <authorList>
            <consortium name="The MGC Project Team"/>
        </authorList>
    </citation>
    <scope>NUCLEOTIDE SEQUENCE [LARGE SCALE MRNA] (ISOFORM 2)</scope>
    <source>
        <tissue>Brain</tissue>
    </source>
</reference>
<reference key="6">
    <citation type="journal article" date="2004" name="Oncol. Rep.">
        <title>Identification and characterization of CDC50A, CDC50B and CDC50C genes in silico.</title>
        <authorList>
            <person name="Katoh Y."/>
            <person name="Katoh M."/>
        </authorList>
    </citation>
    <scope>IDENTIFICATION</scope>
</reference>
<reference key="7">
    <citation type="journal article" date="2009" name="Anal. Chem.">
        <title>Lys-N and trypsin cover complementary parts of the phosphoproteome in a refined SCX-based approach.</title>
        <authorList>
            <person name="Gauci S."/>
            <person name="Helbig A.O."/>
            <person name="Slijper M."/>
            <person name="Krijgsveld J."/>
            <person name="Heck A.J."/>
            <person name="Mohammed S."/>
        </authorList>
    </citation>
    <scope>ACETYLATION [LARGE SCALE ANALYSIS] AT ALA-2</scope>
    <scope>CLEAVAGE OF INITIATOR METHIONINE [LARGE SCALE ANALYSIS]</scope>
    <scope>IDENTIFICATION BY MASS SPECTROMETRY [LARGE SCALE ANALYSIS]</scope>
</reference>
<reference key="8">
    <citation type="journal article" date="2009" name="J. Proteome Res.">
        <title>Glycoproteomics analysis of human liver tissue by combination of multiple enzyme digestion and hydrazide chemistry.</title>
        <authorList>
            <person name="Chen R."/>
            <person name="Jiang X."/>
            <person name="Sun D."/>
            <person name="Han G."/>
            <person name="Wang F."/>
            <person name="Ye M."/>
            <person name="Wang L."/>
            <person name="Zou H."/>
        </authorList>
    </citation>
    <scope>GLYCOSYLATION [LARGE SCALE ANALYSIS] AT ASN-294</scope>
    <source>
        <tissue>Liver</tissue>
    </source>
</reference>
<reference key="9">
    <citation type="journal article" date="2009" name="Nat. Biotechnol.">
        <title>Mass-spectrometric identification and relative quantification of N-linked cell surface glycoproteins.</title>
        <authorList>
            <person name="Wollscheid B."/>
            <person name="Bausch-Fluck D."/>
            <person name="Henderson C."/>
            <person name="O'Brien R."/>
            <person name="Bibel M."/>
            <person name="Schiess R."/>
            <person name="Aebersold R."/>
            <person name="Watts J.D."/>
        </authorList>
    </citation>
    <scope>GLYCOSYLATION [LARGE SCALE ANALYSIS] AT ASN-190</scope>
    <source>
        <tissue>Leukemic T-cell</tissue>
    </source>
</reference>
<reference key="10">
    <citation type="journal article" date="2010" name="Biochem. Pharmacol.">
        <title>CDC50A plays a key role in the uptake of the anticancer drug perifosine in human carcinoma cells.</title>
        <authorList>
            <person name="Munoz-Martinez F."/>
            <person name="Torres C."/>
            <person name="Castanys S."/>
            <person name="Gamarro F."/>
        </authorList>
    </citation>
    <scope>FUNCTION</scope>
</reference>
<reference key="11">
    <citation type="journal article" date="2010" name="J. Biol. Chem.">
        <title>Heteromeric interactions required for abundance and subcellular localization of human CDC50 proteins and class 1 P4-ATPases.</title>
        <authorList>
            <person name="van der Velden L.M."/>
            <person name="Wichers C.G."/>
            <person name="van Breevoort A.E."/>
            <person name="Coleman J.A."/>
            <person name="Molday R.S."/>
            <person name="Berger R."/>
            <person name="Klomp L.W."/>
            <person name="van de Graaf S.F."/>
        </authorList>
    </citation>
    <scope>FUNCTION</scope>
    <scope>SUBCELLULAR LOCATION</scope>
    <scope>INTERACTION WITH ATP8A1; ATP8A2; ATP8B1; ATP8B2 AND ATP8B4</scope>
</reference>
<reference key="12">
    <citation type="journal article" date="2010" name="J. Biol. Chem.">
        <title>CDC50 proteins are critical components of the human class-1 P4-ATPase transport machinery.</title>
        <authorList>
            <person name="Bryde S."/>
            <person name="Hennrich H."/>
            <person name="Verhulst P.M."/>
            <person name="Devaux P.F."/>
            <person name="Lenoir G."/>
            <person name="Holthuis J.C."/>
        </authorList>
    </citation>
    <scope>FUNCTION</scope>
    <scope>SUBCELLULAR LOCATION</scope>
    <scope>INTERACTION WITH ATP8A1; ATP8B1; ATP8B2 AND ATP8B4</scope>
</reference>
<reference key="13">
    <citation type="journal article" date="2011" name="J. Biol. Chem.">
        <title>Critical role of the beta-subunit CDC50A in the stable expression, assembly, subcellular localization, and lipid transport activity of the P4-ATPase ATP8A2.</title>
        <authorList>
            <person name="Coleman J.A."/>
            <person name="Molday R.S."/>
        </authorList>
    </citation>
    <scope>INTERACTION WITH ATP8A2</scope>
</reference>
<reference key="14">
    <citation type="journal article" date="2011" name="J. Biol. Chem.">
        <title>ATP9B, a P4-ATPase (a putative aminophospholipid translocase), localizes to the trans-Golgi network in a CDC50 protein-independent manner.</title>
        <authorList>
            <person name="Takatsu H."/>
            <person name="Baba K."/>
            <person name="Shima T."/>
            <person name="Umino H."/>
            <person name="Kato U."/>
            <person name="Umeda M."/>
            <person name="Nakayama K."/>
            <person name="Shin H.W."/>
        </authorList>
    </citation>
    <scope>INTERACTION WITH ATP11A; ATP11B AND ATP11C</scope>
    <scope>SUBCELLULAR LOCATION</scope>
</reference>
<reference key="15">
    <citation type="journal article" date="2011" name="J. Immunol.">
        <title>Human TMEM30a promotes uptake of antitumor and bioactive choline phospholipids into mammalian cells.</title>
        <authorList>
            <person name="Chen R."/>
            <person name="Brady E."/>
            <person name="McIntyre T.M."/>
        </authorList>
    </citation>
    <scope>FUNCTION</scope>
</reference>
<reference key="16">
    <citation type="journal article" date="2015" name="J. Biol. Chem.">
        <title>Phospholipid Flippase ATP10A Translocates Phosphatidylcholine and Is Involved in Plasma Membrane Dynamics.</title>
        <authorList>
            <person name="Naito T."/>
            <person name="Takatsu H."/>
            <person name="Miyano R."/>
            <person name="Takada N."/>
            <person name="Nakayama K."/>
            <person name="Shin H.W."/>
        </authorList>
    </citation>
    <scope>FUNCTION</scope>
    <scope>INTERACTION WITH ATP8B1; ATP10A; ATP10B; ATP10D AND ATP11A</scope>
</reference>
<reference key="17">
    <citation type="journal article" date="2018" name="Nat. Commun.">
        <title>Cell surface flip-flop of phosphatidylserine is critical for PIEZO1-mediated myotube formation.</title>
        <authorList>
            <person name="Tsuchiya M."/>
            <person name="Hara Y."/>
            <person name="Okuda M."/>
            <person name="Itoh K."/>
            <person name="Nishioka R."/>
            <person name="Shiomi A."/>
            <person name="Nagao K."/>
            <person name="Mori M."/>
            <person name="Mori Y."/>
            <person name="Ikenouchi J."/>
            <person name="Suzuki R."/>
            <person name="Tanaka M."/>
            <person name="Ohwada T."/>
            <person name="Aoki J."/>
            <person name="Kanagawa M."/>
            <person name="Toda T."/>
            <person name="Nagata Y."/>
            <person name="Matsuda R."/>
            <person name="Takayama Y."/>
            <person name="Tominaga M."/>
            <person name="Umeda M."/>
        </authorList>
    </citation>
    <scope>FUNCTION</scope>
    <scope>INTERACTION WITH ATP11A</scope>
</reference>
<reference key="18">
    <citation type="journal article" date="2020" name="J. Biol. Chem.">
        <title>Crystal structure of a human plasma membrane phospholipid flippase.</title>
        <authorList>
            <person name="Nakanishi H."/>
            <person name="Irie K."/>
            <person name="Segawa K."/>
            <person name="Hasegawa K."/>
            <person name="Fujiyoshi Y."/>
            <person name="Nagata S."/>
            <person name="Abe K."/>
        </authorList>
    </citation>
    <scope>X-RAY CRYSTALLOGRAPHY (3.90 ANGSTROMS) IN COMPLEX WITH ATP11C</scope>
    <scope>FUNCTION</scope>
    <scope>MUTAGENESIS OF ARG-132; ARG-133 AND LYS-136</scope>
</reference>
<reference key="19">
    <citation type="journal article" date="2019" name="Science">
        <title>Cryo-EM structures capture the transport cycle of the P4-ATPase flippase.</title>
        <authorList>
            <person name="Hiraizumi M."/>
            <person name="Yamashita K."/>
            <person name="Nishizawa T."/>
            <person name="Nureki O."/>
        </authorList>
    </citation>
    <scope>STRUCTURE BY ELECTRON MICROSCOPY (2.83 ANGSTROMS)IN COMPLEX WITH ATP8A1</scope>
    <scope>DISULFIDE BONDS</scope>
    <scope>GLYCOSYLATION AT ASN-107; ASN-180 AND ASN-294</scope>
    <scope>INTERACTION WITH ATP8A1</scope>
</reference>
<protein>
    <recommendedName>
        <fullName evidence="19">Cell cycle control protein 50A</fullName>
    </recommendedName>
    <alternativeName>
        <fullName>P4-ATPase flippase complex beta subunit TMEM30A</fullName>
    </alternativeName>
    <alternativeName>
        <fullName>Transmembrane protein 30A</fullName>
    </alternativeName>
</protein>
<sequence length="361" mass="40684">MAMNYNAKDEVDGGPPCAPGGTAKTRRPDNTAFKQQRLPAWQPILTAGTVLPIFFIIGLIFIPIGIGIFVTSNNIREIEIDYTGTEPSSPCNKCLSPDVTPCFCTINFTLEKSFEGNVFMYYGLSNFYQNHRRYVKSRDDSQLNGDSSALLNPSKECEPYRRNEDKPIAPCGAIANSMFNDTLELFLIGNDSYPIPIALKKKGIAWWTDKNVKFRNPPGGDNLEERFKGTTKPVNWLKPVYMLDSDPDNNGFINEDFIVWMRTAALPTFRKLYRLIERKSDLHPTLPAGRYSLNVTYNYPVHYFDGRKRMILSTISWMGGKNPFLGIAYIAVGSISFLLGVVLLVINHKYRNSSNTADITI</sequence>